<gene>
    <name type="primary">nrgB</name>
    <name type="ordered locus">BSU36520</name>
</gene>
<reference key="1">
    <citation type="journal article" date="1994" name="J. Bacteriol.">
        <title>The nitrogen-regulated Bacillus subtilis nrgAB operon encodes a membrane protein and a protein highly similar to the Escherichia coli glnB-encoded PII protein.</title>
        <authorList>
            <person name="Wray L.V. Jr."/>
            <person name="Atkinson M.R."/>
            <person name="Fisher S.H."/>
        </authorList>
    </citation>
    <scope>NUCLEOTIDE SEQUENCE [GENOMIC DNA]</scope>
</reference>
<reference key="2">
    <citation type="journal article" date="1997" name="Microbiology">
        <title>The Bacillus subtilis genome from gerBC (311 degrees) to licR (334 degrees).</title>
        <authorList>
            <person name="Presecan E."/>
            <person name="Moszer I."/>
            <person name="Boursier L."/>
            <person name="Cruz Ramos H."/>
            <person name="De La Fuente V."/>
            <person name="Hullo M.-F."/>
            <person name="Lelong C."/>
            <person name="Schleich S."/>
            <person name="Sekowska A."/>
            <person name="Song B.H."/>
            <person name="Villani G."/>
            <person name="Kunst F."/>
            <person name="Danchin A."/>
            <person name="Glaser P."/>
        </authorList>
    </citation>
    <scope>NUCLEOTIDE SEQUENCE [GENOMIC DNA]</scope>
    <source>
        <strain>168</strain>
    </source>
</reference>
<reference key="3">
    <citation type="journal article" date="1997" name="Nature">
        <title>The complete genome sequence of the Gram-positive bacterium Bacillus subtilis.</title>
        <authorList>
            <person name="Kunst F."/>
            <person name="Ogasawara N."/>
            <person name="Moszer I."/>
            <person name="Albertini A.M."/>
            <person name="Alloni G."/>
            <person name="Azevedo V."/>
            <person name="Bertero M.G."/>
            <person name="Bessieres P."/>
            <person name="Bolotin A."/>
            <person name="Borchert S."/>
            <person name="Borriss R."/>
            <person name="Boursier L."/>
            <person name="Brans A."/>
            <person name="Braun M."/>
            <person name="Brignell S.C."/>
            <person name="Bron S."/>
            <person name="Brouillet S."/>
            <person name="Bruschi C.V."/>
            <person name="Caldwell B."/>
            <person name="Capuano V."/>
            <person name="Carter N.M."/>
            <person name="Choi S.-K."/>
            <person name="Codani J.-J."/>
            <person name="Connerton I.F."/>
            <person name="Cummings N.J."/>
            <person name="Daniel R.A."/>
            <person name="Denizot F."/>
            <person name="Devine K.M."/>
            <person name="Duesterhoeft A."/>
            <person name="Ehrlich S.D."/>
            <person name="Emmerson P.T."/>
            <person name="Entian K.-D."/>
            <person name="Errington J."/>
            <person name="Fabret C."/>
            <person name="Ferrari E."/>
            <person name="Foulger D."/>
            <person name="Fritz C."/>
            <person name="Fujita M."/>
            <person name="Fujita Y."/>
            <person name="Fuma S."/>
            <person name="Galizzi A."/>
            <person name="Galleron N."/>
            <person name="Ghim S.-Y."/>
            <person name="Glaser P."/>
            <person name="Goffeau A."/>
            <person name="Golightly E.J."/>
            <person name="Grandi G."/>
            <person name="Guiseppi G."/>
            <person name="Guy B.J."/>
            <person name="Haga K."/>
            <person name="Haiech J."/>
            <person name="Harwood C.R."/>
            <person name="Henaut A."/>
            <person name="Hilbert H."/>
            <person name="Holsappel S."/>
            <person name="Hosono S."/>
            <person name="Hullo M.-F."/>
            <person name="Itaya M."/>
            <person name="Jones L.-M."/>
            <person name="Joris B."/>
            <person name="Karamata D."/>
            <person name="Kasahara Y."/>
            <person name="Klaerr-Blanchard M."/>
            <person name="Klein C."/>
            <person name="Kobayashi Y."/>
            <person name="Koetter P."/>
            <person name="Koningstein G."/>
            <person name="Krogh S."/>
            <person name="Kumano M."/>
            <person name="Kurita K."/>
            <person name="Lapidus A."/>
            <person name="Lardinois S."/>
            <person name="Lauber J."/>
            <person name="Lazarevic V."/>
            <person name="Lee S.-M."/>
            <person name="Levine A."/>
            <person name="Liu H."/>
            <person name="Masuda S."/>
            <person name="Mauel C."/>
            <person name="Medigue C."/>
            <person name="Medina N."/>
            <person name="Mellado R.P."/>
            <person name="Mizuno M."/>
            <person name="Moestl D."/>
            <person name="Nakai S."/>
            <person name="Noback M."/>
            <person name="Noone D."/>
            <person name="O'Reilly M."/>
            <person name="Ogawa K."/>
            <person name="Ogiwara A."/>
            <person name="Oudega B."/>
            <person name="Park S.-H."/>
            <person name="Parro V."/>
            <person name="Pohl T.M."/>
            <person name="Portetelle D."/>
            <person name="Porwollik S."/>
            <person name="Prescott A.M."/>
            <person name="Presecan E."/>
            <person name="Pujic P."/>
            <person name="Purnelle B."/>
            <person name="Rapoport G."/>
            <person name="Rey M."/>
            <person name="Reynolds S."/>
            <person name="Rieger M."/>
            <person name="Rivolta C."/>
            <person name="Rocha E."/>
            <person name="Roche B."/>
            <person name="Rose M."/>
            <person name="Sadaie Y."/>
            <person name="Sato T."/>
            <person name="Scanlan E."/>
            <person name="Schleich S."/>
            <person name="Schroeter R."/>
            <person name="Scoffone F."/>
            <person name="Sekiguchi J."/>
            <person name="Sekowska A."/>
            <person name="Seror S.J."/>
            <person name="Serror P."/>
            <person name="Shin B.-S."/>
            <person name="Soldo B."/>
            <person name="Sorokin A."/>
            <person name="Tacconi E."/>
            <person name="Takagi T."/>
            <person name="Takahashi H."/>
            <person name="Takemaru K."/>
            <person name="Takeuchi M."/>
            <person name="Tamakoshi A."/>
            <person name="Tanaka T."/>
            <person name="Terpstra P."/>
            <person name="Tognoni A."/>
            <person name="Tosato V."/>
            <person name="Uchiyama S."/>
            <person name="Vandenbol M."/>
            <person name="Vannier F."/>
            <person name="Vassarotti A."/>
            <person name="Viari A."/>
            <person name="Wambutt R."/>
            <person name="Wedler E."/>
            <person name="Wedler H."/>
            <person name="Weitzenegger T."/>
            <person name="Winters P."/>
            <person name="Wipat A."/>
            <person name="Yamamoto H."/>
            <person name="Yamane K."/>
            <person name="Yasumoto K."/>
            <person name="Yata K."/>
            <person name="Yoshida K."/>
            <person name="Yoshikawa H.-F."/>
            <person name="Zumstein E."/>
            <person name="Yoshikawa H."/>
            <person name="Danchin A."/>
        </authorList>
    </citation>
    <scope>NUCLEOTIDE SEQUENCE [LARGE SCALE GENOMIC DNA]</scope>
    <source>
        <strain>168</strain>
    </source>
</reference>
<reference key="4">
    <citation type="journal article" date="2003" name="Microbiology">
        <title>Ammonium utilization in Bacillus subtilis: transport and regulatory functions of NrgA and NrgB.</title>
        <authorList>
            <person name="Detsch C."/>
            <person name="Stuelke J."/>
        </authorList>
    </citation>
    <scope>FUNCTION</scope>
    <scope>DISRUPTION PHENOTYPE</scope>
    <scope>SUBCELLULAR LOCATION</scope>
    <source>
        <strain>168</strain>
    </source>
</reference>
<reference key="5">
    <citation type="journal article" date="2003" name="Mol. Microbiol.">
        <title>Identification of additional TnrA-regulated genes of Bacillus subtilis associated with a TnrA box.</title>
        <authorList>
            <person name="Yoshida K."/>
            <person name="Yamaguchi H."/>
            <person name="Kinehara M."/>
            <person name="Ohki Y.-H."/>
            <person name="Nakaura Y."/>
            <person name="Fujita Y."/>
        </authorList>
    </citation>
    <scope>INDUCTION BY TNRA</scope>
</reference>
<reference key="6">
    <citation type="journal article" date="2000" name="J. Mol. Biol.">
        <title>Purification and in vitro activities of the Bacillus subtilis TnrA transcription factor.</title>
        <authorList>
            <person name="Wray L.V. Jr."/>
            <person name="Zalieckas J.M."/>
            <person name="Fisher S.H."/>
        </authorList>
    </citation>
    <scope>REGULATION OF THE NRGAB OPERON BY TNRA</scope>
    <source>
        <strain>168</strain>
    </source>
</reference>
<comment type="function">
    <text evidence="3">Required for full induction of the nrgAB operon under conditions of ammonium limitation.</text>
</comment>
<comment type="subunit">
    <text>Needs to interact with NrgA in order to localize correctly to the membrane.</text>
</comment>
<comment type="subcellular location">
    <subcellularLocation>
        <location evidence="3">Cell membrane</location>
        <topology evidence="3">Peripheral membrane protein</topology>
    </subcellularLocation>
</comment>
<comment type="induction">
    <text evidence="2">The nrgAB operon is activated by TnrA under nitrogen-limited conditions.</text>
</comment>
<comment type="disruption phenotype">
    <text evidence="3">Cells show no growth phenotype even at acidic pH.</text>
</comment>
<comment type="similarity">
    <text evidence="1">Belongs to the P(II) protein family.</text>
</comment>
<comment type="caution">
    <text evidence="4">It is uncertain whether Met-1 or Met-5 is the initiator.</text>
</comment>
<proteinExistence type="evidence at protein level"/>
<protein>
    <recommendedName>
        <fullName>Nitrogen regulatory PII-like protein</fullName>
    </recommendedName>
</protein>
<feature type="chain" id="PRO_0000139814" description="Nitrogen regulatory PII-like protein">
    <location>
        <begin position="1"/>
        <end position="116"/>
    </location>
</feature>
<feature type="strand" evidence="5">
    <location>
        <begin position="6"/>
        <end position="12"/>
    </location>
</feature>
<feature type="helix" evidence="5">
    <location>
        <begin position="17"/>
        <end position="27"/>
    </location>
</feature>
<feature type="strand" evidence="5">
    <location>
        <begin position="33"/>
        <end position="46"/>
    </location>
</feature>
<feature type="helix" evidence="6">
    <location>
        <begin position="48"/>
        <end position="50"/>
    </location>
</feature>
<feature type="strand" evidence="5">
    <location>
        <begin position="53"/>
        <end position="72"/>
    </location>
</feature>
<feature type="helix" evidence="5">
    <location>
        <begin position="74"/>
        <end position="85"/>
    </location>
</feature>
<feature type="strand" evidence="5">
    <location>
        <begin position="88"/>
        <end position="90"/>
    </location>
</feature>
<feature type="strand" evidence="5">
    <location>
        <begin position="94"/>
        <end position="99"/>
    </location>
</feature>
<feature type="strand" evidence="6">
    <location>
        <begin position="101"/>
        <end position="105"/>
    </location>
</feature>
<feature type="turn" evidence="5">
    <location>
        <begin position="106"/>
        <end position="108"/>
    </location>
</feature>
<feature type="helix" evidence="5">
    <location>
        <begin position="112"/>
        <end position="114"/>
    </location>
</feature>
<dbReference type="EMBL" id="L03216">
    <property type="protein sequence ID" value="AAA17400.1"/>
    <property type="molecule type" value="Unassigned_DNA"/>
</dbReference>
<dbReference type="EMBL" id="Z82987">
    <property type="protein sequence ID" value="CAB05373.1"/>
    <property type="molecule type" value="Genomic_DNA"/>
</dbReference>
<dbReference type="EMBL" id="AL009126">
    <property type="protein sequence ID" value="CAB15669.1"/>
    <property type="molecule type" value="Genomic_DNA"/>
</dbReference>
<dbReference type="PIR" id="B36865">
    <property type="entry name" value="B36865"/>
</dbReference>
<dbReference type="RefSeq" id="WP_003221829.1">
    <property type="nucleotide sequence ID" value="NZ_OZ025638.1"/>
</dbReference>
<dbReference type="PDB" id="4R25">
    <property type="method" value="X-ray"/>
    <property type="resolution" value="2.52 A"/>
    <property type="chains" value="A=5-116"/>
</dbReference>
<dbReference type="PDB" id="4RX6">
    <property type="method" value="X-ray"/>
    <property type="resolution" value="2.60 A"/>
    <property type="chains" value="A/B/D=1-116"/>
</dbReference>
<dbReference type="PDBsum" id="4R25"/>
<dbReference type="PDBsum" id="4RX6"/>
<dbReference type="SMR" id="Q07428"/>
<dbReference type="FunCoup" id="Q07428">
    <property type="interactions" value="501"/>
</dbReference>
<dbReference type="STRING" id="224308.BSU36520"/>
<dbReference type="PaxDb" id="224308-BSU36520"/>
<dbReference type="EnsemblBacteria" id="CAB15669">
    <property type="protein sequence ID" value="CAB15669"/>
    <property type="gene ID" value="BSU_36520"/>
</dbReference>
<dbReference type="GeneID" id="936937"/>
<dbReference type="KEGG" id="bsu:BSU36520"/>
<dbReference type="PATRIC" id="fig|224308.179.peg.3952"/>
<dbReference type="eggNOG" id="COG0347">
    <property type="taxonomic scope" value="Bacteria"/>
</dbReference>
<dbReference type="InParanoid" id="Q07428"/>
<dbReference type="OrthoDB" id="9802729at2"/>
<dbReference type="PhylomeDB" id="Q07428"/>
<dbReference type="BioCyc" id="BSUB:BSU36520-MONOMER"/>
<dbReference type="EvolutionaryTrace" id="Q07428"/>
<dbReference type="PRO" id="PR:Q07428"/>
<dbReference type="Proteomes" id="UP000001570">
    <property type="component" value="Chromosome"/>
</dbReference>
<dbReference type="GO" id="GO:0005829">
    <property type="term" value="C:cytosol"/>
    <property type="evidence" value="ECO:0000318"/>
    <property type="project" value="GO_Central"/>
</dbReference>
<dbReference type="GO" id="GO:0005886">
    <property type="term" value="C:plasma membrane"/>
    <property type="evidence" value="ECO:0007669"/>
    <property type="project" value="UniProtKB-SubCell"/>
</dbReference>
<dbReference type="GO" id="GO:0005524">
    <property type="term" value="F:ATP binding"/>
    <property type="evidence" value="ECO:0000318"/>
    <property type="project" value="GO_Central"/>
</dbReference>
<dbReference type="GO" id="GO:0030234">
    <property type="term" value="F:enzyme regulator activity"/>
    <property type="evidence" value="ECO:0000318"/>
    <property type="project" value="GO_Central"/>
</dbReference>
<dbReference type="GO" id="GO:0006808">
    <property type="term" value="P:regulation of nitrogen utilization"/>
    <property type="evidence" value="ECO:0000318"/>
    <property type="project" value="GO_Central"/>
</dbReference>
<dbReference type="Gene3D" id="3.30.70.120">
    <property type="match status" value="1"/>
</dbReference>
<dbReference type="InterPro" id="IPR002187">
    <property type="entry name" value="N-reg_PII"/>
</dbReference>
<dbReference type="InterPro" id="IPR011322">
    <property type="entry name" value="N-reg_PII-like_a/b"/>
</dbReference>
<dbReference type="InterPro" id="IPR015867">
    <property type="entry name" value="N-reg_PII/ATP_PRibTrfase_C"/>
</dbReference>
<dbReference type="InterPro" id="IPR017918">
    <property type="entry name" value="N-reg_PII_CS"/>
</dbReference>
<dbReference type="PANTHER" id="PTHR30115">
    <property type="entry name" value="NITROGEN REGULATORY PROTEIN P-II"/>
    <property type="match status" value="1"/>
</dbReference>
<dbReference type="PANTHER" id="PTHR30115:SF11">
    <property type="entry name" value="NITROGEN REGULATORY PROTEIN P-II HOMOLOG"/>
    <property type="match status" value="1"/>
</dbReference>
<dbReference type="Pfam" id="PF00543">
    <property type="entry name" value="P-II"/>
    <property type="match status" value="1"/>
</dbReference>
<dbReference type="PRINTS" id="PR00340">
    <property type="entry name" value="PIIGLNB"/>
</dbReference>
<dbReference type="SMART" id="SM00938">
    <property type="entry name" value="P-II"/>
    <property type="match status" value="1"/>
</dbReference>
<dbReference type="SUPFAM" id="SSF54913">
    <property type="entry name" value="GlnB-like"/>
    <property type="match status" value="1"/>
</dbReference>
<dbReference type="PROSITE" id="PS00638">
    <property type="entry name" value="PII_GLNB_CTER"/>
    <property type="match status" value="1"/>
</dbReference>
<dbReference type="PROSITE" id="PS51343">
    <property type="entry name" value="PII_GLNB_DOM"/>
    <property type="match status" value="1"/>
</dbReference>
<evidence type="ECO:0000255" key="1">
    <source>
        <dbReference type="PROSITE-ProRule" id="PRU00675"/>
    </source>
</evidence>
<evidence type="ECO:0000269" key="2">
    <source>
    </source>
</evidence>
<evidence type="ECO:0000269" key="3">
    <source>
    </source>
</evidence>
<evidence type="ECO:0000305" key="4"/>
<evidence type="ECO:0007829" key="5">
    <source>
        <dbReference type="PDB" id="4R25"/>
    </source>
</evidence>
<evidence type="ECO:0007829" key="6">
    <source>
        <dbReference type="PDB" id="4RX6"/>
    </source>
</evidence>
<keyword id="KW-0002">3D-structure</keyword>
<keyword id="KW-0010">Activator</keyword>
<keyword id="KW-1003">Cell membrane</keyword>
<keyword id="KW-0472">Membrane</keyword>
<keyword id="KW-1185">Reference proteome</keyword>
<keyword id="KW-0804">Transcription</keyword>
<keyword id="KW-0805">Transcription regulation</keyword>
<accession>Q07428</accession>
<name>NRGB_BACSU</name>
<sequence length="116" mass="12822">MSGQMFKVEIVTRPANFEKLKQELGKIGVTSLTFSNVHGCGLQKAHTELYRGVKIESNVYERLKIEIVVSKVPVDQVTETAKRVLKTGSPGDGKIFVYEISNTINIRTGEEGPEAL</sequence>
<organism>
    <name type="scientific">Bacillus subtilis (strain 168)</name>
    <dbReference type="NCBI Taxonomy" id="224308"/>
    <lineage>
        <taxon>Bacteria</taxon>
        <taxon>Bacillati</taxon>
        <taxon>Bacillota</taxon>
        <taxon>Bacilli</taxon>
        <taxon>Bacillales</taxon>
        <taxon>Bacillaceae</taxon>
        <taxon>Bacillus</taxon>
    </lineage>
</organism>